<keyword id="KW-0842">Viral occlusion body</keyword>
<reference key="1">
    <citation type="journal article" date="1985" name="J. Gen. Virol.">
        <title>The nucleotide sequence of the Pieris brassicae granulosis virus granulin gene.</title>
        <authorList>
            <person name="Chakerian R."/>
            <person name="Rohrmann G.F."/>
            <person name="Nesson M.H."/>
            <person name="Leisy D.J."/>
            <person name="Beaudreau G.S."/>
        </authorList>
    </citation>
    <scope>NUCLEOTIDE SEQUENCE [GENOMIC DNA]</scope>
</reference>
<name>GRAN_GVPB</name>
<dbReference type="EMBL" id="X02498">
    <property type="protein sequence ID" value="CAA26331.1"/>
    <property type="molecule type" value="Genomic_DNA"/>
</dbReference>
<dbReference type="SMR" id="P06502"/>
<dbReference type="GO" id="GO:0039679">
    <property type="term" value="C:viral occlusion body"/>
    <property type="evidence" value="ECO:0007669"/>
    <property type="project" value="UniProtKB-KW"/>
</dbReference>
<dbReference type="GO" id="GO:0005198">
    <property type="term" value="F:structural molecule activity"/>
    <property type="evidence" value="ECO:0007669"/>
    <property type="project" value="InterPro"/>
</dbReference>
<dbReference type="InterPro" id="IPR001746">
    <property type="entry name" value="Polyhedrin"/>
</dbReference>
<dbReference type="Pfam" id="PF00738">
    <property type="entry name" value="Polyhedrin"/>
    <property type="match status" value="1"/>
</dbReference>
<comment type="function">
    <text>Component of the virus occlusion bodies, which are large proteinaceous structures, that protect the virus from the outside environment for extended periods until they are ingested by insect larvae.</text>
</comment>
<comment type="similarity">
    <text evidence="1">Belongs to the polyhedrin family.</text>
</comment>
<feature type="chain" id="PRO_0000217266" description="Granulin">
    <location>
        <begin position="1"/>
        <end position="247"/>
    </location>
</feature>
<sequence>MGYNRALRYSKHEGTTCVIDNQHYKSLGAVLKDVKHKKDRLREAEIEPVLDIADQYMVTEDPFRGPGKNVRITLFKECRRVEPDTLKLVCNWSGKEFLREMWTRFISEEFPITTDQQIMNMWFEIQVRPMQPNRCYKFTMQYALDAHPDYVPHDVIRAQDPYYIGPNNIERINLKKGFAFPLMCLQSVYNDNFETFFEDVLWPYFHRPLVYIGTTSSETEEILLEVSFLFKIKEFAPDVPLYTGPAY</sequence>
<protein>
    <recommendedName>
        <fullName>Granulin</fullName>
    </recommendedName>
    <alternativeName>
        <fullName>Matrix protein</fullName>
    </alternativeName>
</protein>
<evidence type="ECO:0000305" key="1"/>
<organism>
    <name type="scientific">Pieris brassicae granulosis virus</name>
    <name type="common">PbGV</name>
    <name type="synonym">Pieris brassicae granulovirus</name>
    <dbReference type="NCBI Taxonomy" id="10465"/>
    <lineage>
        <taxon>Viruses</taxon>
        <taxon>Viruses incertae sedis</taxon>
        <taxon>Naldaviricetes</taxon>
        <taxon>Lefavirales</taxon>
        <taxon>Baculoviridae</taxon>
        <taxon>Betabaculovirus</taxon>
        <taxon>Betabaculovirus arrapae</taxon>
    </lineage>
</organism>
<organismHost>
    <name type="scientific">Pieris brassicae</name>
    <name type="common">White butterfly</name>
    <name type="synonym">Large white butterfly</name>
    <dbReference type="NCBI Taxonomy" id="7116"/>
</organismHost>
<accession>P06502</accession>
<proteinExistence type="inferred from homology"/>